<proteinExistence type="inferred from homology"/>
<feature type="chain" id="PRO_1000139313" description="GTP 3',8-cyclase">
    <location>
        <begin position="1"/>
        <end position="340"/>
    </location>
</feature>
<feature type="domain" description="Radical SAM core" evidence="2">
    <location>
        <begin position="20"/>
        <end position="246"/>
    </location>
</feature>
<feature type="binding site" evidence="1">
    <location>
        <position position="29"/>
    </location>
    <ligand>
        <name>GTP</name>
        <dbReference type="ChEBI" id="CHEBI:37565"/>
    </ligand>
</feature>
<feature type="binding site" evidence="1">
    <location>
        <position position="36"/>
    </location>
    <ligand>
        <name>[4Fe-4S] cluster</name>
        <dbReference type="ChEBI" id="CHEBI:49883"/>
        <label>1</label>
        <note>4Fe-4S-S-AdoMet</note>
    </ligand>
</feature>
<feature type="binding site" evidence="1">
    <location>
        <position position="40"/>
    </location>
    <ligand>
        <name>[4Fe-4S] cluster</name>
        <dbReference type="ChEBI" id="CHEBI:49883"/>
        <label>1</label>
        <note>4Fe-4S-S-AdoMet</note>
    </ligand>
</feature>
<feature type="binding site" evidence="1">
    <location>
        <position position="42"/>
    </location>
    <ligand>
        <name>S-adenosyl-L-methionine</name>
        <dbReference type="ChEBI" id="CHEBI:59789"/>
    </ligand>
</feature>
<feature type="binding site" evidence="1">
    <location>
        <position position="43"/>
    </location>
    <ligand>
        <name>[4Fe-4S] cluster</name>
        <dbReference type="ChEBI" id="CHEBI:49883"/>
        <label>1</label>
        <note>4Fe-4S-S-AdoMet</note>
    </ligand>
</feature>
<feature type="binding site" evidence="1">
    <location>
        <position position="79"/>
    </location>
    <ligand>
        <name>GTP</name>
        <dbReference type="ChEBI" id="CHEBI:37565"/>
    </ligand>
</feature>
<feature type="binding site" evidence="1">
    <location>
        <position position="83"/>
    </location>
    <ligand>
        <name>S-adenosyl-L-methionine</name>
        <dbReference type="ChEBI" id="CHEBI:59789"/>
    </ligand>
</feature>
<feature type="binding site" evidence="1">
    <location>
        <position position="110"/>
    </location>
    <ligand>
        <name>GTP</name>
        <dbReference type="ChEBI" id="CHEBI:37565"/>
    </ligand>
</feature>
<feature type="binding site" evidence="1">
    <location>
        <position position="134"/>
    </location>
    <ligand>
        <name>S-adenosyl-L-methionine</name>
        <dbReference type="ChEBI" id="CHEBI:59789"/>
    </ligand>
</feature>
<feature type="binding site" evidence="1">
    <location>
        <position position="171"/>
    </location>
    <ligand>
        <name>GTP</name>
        <dbReference type="ChEBI" id="CHEBI:37565"/>
    </ligand>
</feature>
<feature type="binding site" evidence="1">
    <location>
        <position position="205"/>
    </location>
    <ligand>
        <name>S-adenosyl-L-methionine</name>
        <dbReference type="ChEBI" id="CHEBI:59789"/>
    </ligand>
</feature>
<feature type="binding site" evidence="1">
    <location>
        <position position="268"/>
    </location>
    <ligand>
        <name>[4Fe-4S] cluster</name>
        <dbReference type="ChEBI" id="CHEBI:49883"/>
        <label>2</label>
        <note>4Fe-4S-substrate</note>
    </ligand>
</feature>
<feature type="binding site" evidence="1">
    <location>
        <position position="271"/>
    </location>
    <ligand>
        <name>[4Fe-4S] cluster</name>
        <dbReference type="ChEBI" id="CHEBI:49883"/>
        <label>2</label>
        <note>4Fe-4S-substrate</note>
    </ligand>
</feature>
<feature type="binding site" evidence="1">
    <location>
        <begin position="273"/>
        <end position="275"/>
    </location>
    <ligand>
        <name>GTP</name>
        <dbReference type="ChEBI" id="CHEBI:37565"/>
    </ligand>
</feature>
<feature type="binding site" evidence="1">
    <location>
        <position position="285"/>
    </location>
    <ligand>
        <name>[4Fe-4S] cluster</name>
        <dbReference type="ChEBI" id="CHEBI:49883"/>
        <label>2</label>
        <note>4Fe-4S-substrate</note>
    </ligand>
</feature>
<dbReference type="EC" id="4.1.99.22" evidence="1"/>
<dbReference type="EMBL" id="CP000687">
    <property type="protein sequence ID" value="ABY69257.1"/>
    <property type="molecule type" value="Genomic_DNA"/>
</dbReference>
<dbReference type="RefSeq" id="WP_005607581.1">
    <property type="nucleotide sequence ID" value="NC_010278.1"/>
</dbReference>
<dbReference type="SMR" id="B0BNX2"/>
<dbReference type="KEGG" id="apj:APJL_0688"/>
<dbReference type="HOGENOM" id="CLU_009273_0_1_6"/>
<dbReference type="UniPathway" id="UPA00344"/>
<dbReference type="Proteomes" id="UP000008547">
    <property type="component" value="Chromosome"/>
</dbReference>
<dbReference type="GO" id="GO:0051539">
    <property type="term" value="F:4 iron, 4 sulfur cluster binding"/>
    <property type="evidence" value="ECO:0007669"/>
    <property type="project" value="UniProtKB-UniRule"/>
</dbReference>
<dbReference type="GO" id="GO:0061799">
    <property type="term" value="F:cyclic pyranopterin monophosphate synthase activity"/>
    <property type="evidence" value="ECO:0007669"/>
    <property type="project" value="TreeGrafter"/>
</dbReference>
<dbReference type="GO" id="GO:0061798">
    <property type="term" value="F:GTP 3',8'-cyclase activity"/>
    <property type="evidence" value="ECO:0007669"/>
    <property type="project" value="UniProtKB-UniRule"/>
</dbReference>
<dbReference type="GO" id="GO:0005525">
    <property type="term" value="F:GTP binding"/>
    <property type="evidence" value="ECO:0007669"/>
    <property type="project" value="UniProtKB-UniRule"/>
</dbReference>
<dbReference type="GO" id="GO:0046872">
    <property type="term" value="F:metal ion binding"/>
    <property type="evidence" value="ECO:0007669"/>
    <property type="project" value="UniProtKB-KW"/>
</dbReference>
<dbReference type="GO" id="GO:1904047">
    <property type="term" value="F:S-adenosyl-L-methionine binding"/>
    <property type="evidence" value="ECO:0007669"/>
    <property type="project" value="UniProtKB-UniRule"/>
</dbReference>
<dbReference type="GO" id="GO:0006777">
    <property type="term" value="P:Mo-molybdopterin cofactor biosynthetic process"/>
    <property type="evidence" value="ECO:0007669"/>
    <property type="project" value="UniProtKB-UniRule"/>
</dbReference>
<dbReference type="CDD" id="cd01335">
    <property type="entry name" value="Radical_SAM"/>
    <property type="match status" value="1"/>
</dbReference>
<dbReference type="CDD" id="cd21117">
    <property type="entry name" value="Twitch_MoaA"/>
    <property type="match status" value="1"/>
</dbReference>
<dbReference type="FunFam" id="3.20.20.70:FF:000057">
    <property type="entry name" value="GTP 3',8-cyclase"/>
    <property type="match status" value="1"/>
</dbReference>
<dbReference type="Gene3D" id="3.20.20.70">
    <property type="entry name" value="Aldolase class I"/>
    <property type="match status" value="1"/>
</dbReference>
<dbReference type="HAMAP" id="MF_01225_B">
    <property type="entry name" value="MoaA_B"/>
    <property type="match status" value="1"/>
</dbReference>
<dbReference type="InterPro" id="IPR013785">
    <property type="entry name" value="Aldolase_TIM"/>
</dbReference>
<dbReference type="InterPro" id="IPR006638">
    <property type="entry name" value="Elp3/MiaA/NifB-like_rSAM"/>
</dbReference>
<dbReference type="InterPro" id="IPR013483">
    <property type="entry name" value="MoaA"/>
</dbReference>
<dbReference type="InterPro" id="IPR000385">
    <property type="entry name" value="MoaA_NifB_PqqE_Fe-S-bd_CS"/>
</dbReference>
<dbReference type="InterPro" id="IPR010505">
    <property type="entry name" value="MoaA_twitch"/>
</dbReference>
<dbReference type="InterPro" id="IPR050105">
    <property type="entry name" value="MoCo_biosynth_MoaA/MoaC"/>
</dbReference>
<dbReference type="InterPro" id="IPR007197">
    <property type="entry name" value="rSAM"/>
</dbReference>
<dbReference type="NCBIfam" id="TIGR02666">
    <property type="entry name" value="moaA"/>
    <property type="match status" value="1"/>
</dbReference>
<dbReference type="PANTHER" id="PTHR22960:SF28">
    <property type="entry name" value="GTP 3',8-CYCLASE"/>
    <property type="match status" value="1"/>
</dbReference>
<dbReference type="PANTHER" id="PTHR22960">
    <property type="entry name" value="MOLYBDOPTERIN COFACTOR SYNTHESIS PROTEIN A"/>
    <property type="match status" value="1"/>
</dbReference>
<dbReference type="Pfam" id="PF13353">
    <property type="entry name" value="Fer4_12"/>
    <property type="match status" value="1"/>
</dbReference>
<dbReference type="Pfam" id="PF06463">
    <property type="entry name" value="Mob_synth_C"/>
    <property type="match status" value="1"/>
</dbReference>
<dbReference type="Pfam" id="PF04055">
    <property type="entry name" value="Radical_SAM"/>
    <property type="match status" value="1"/>
</dbReference>
<dbReference type="SFLD" id="SFLDG01383">
    <property type="entry name" value="cyclic_pyranopterin_phosphate"/>
    <property type="match status" value="1"/>
</dbReference>
<dbReference type="SFLD" id="SFLDS00029">
    <property type="entry name" value="Radical_SAM"/>
    <property type="match status" value="1"/>
</dbReference>
<dbReference type="SMART" id="SM00729">
    <property type="entry name" value="Elp3"/>
    <property type="match status" value="1"/>
</dbReference>
<dbReference type="SUPFAM" id="SSF102114">
    <property type="entry name" value="Radical SAM enzymes"/>
    <property type="match status" value="1"/>
</dbReference>
<dbReference type="PROSITE" id="PS01305">
    <property type="entry name" value="MOAA_NIFB_PQQE"/>
    <property type="match status" value="1"/>
</dbReference>
<dbReference type="PROSITE" id="PS51918">
    <property type="entry name" value="RADICAL_SAM"/>
    <property type="match status" value="1"/>
</dbReference>
<comment type="function">
    <text evidence="1">Catalyzes the cyclization of GTP to (8S)-3',8-cyclo-7,8-dihydroguanosine 5'-triphosphate.</text>
</comment>
<comment type="catalytic activity">
    <reaction evidence="1">
        <text>GTP + AH2 + S-adenosyl-L-methionine = (8S)-3',8-cyclo-7,8-dihydroguanosine 5'-triphosphate + 5'-deoxyadenosine + L-methionine + A + H(+)</text>
        <dbReference type="Rhea" id="RHEA:49576"/>
        <dbReference type="ChEBI" id="CHEBI:13193"/>
        <dbReference type="ChEBI" id="CHEBI:15378"/>
        <dbReference type="ChEBI" id="CHEBI:17319"/>
        <dbReference type="ChEBI" id="CHEBI:17499"/>
        <dbReference type="ChEBI" id="CHEBI:37565"/>
        <dbReference type="ChEBI" id="CHEBI:57844"/>
        <dbReference type="ChEBI" id="CHEBI:59789"/>
        <dbReference type="ChEBI" id="CHEBI:131766"/>
        <dbReference type="EC" id="4.1.99.22"/>
    </reaction>
</comment>
<comment type="cofactor">
    <cofactor evidence="1">
        <name>[4Fe-4S] cluster</name>
        <dbReference type="ChEBI" id="CHEBI:49883"/>
    </cofactor>
    <text evidence="1">Binds 2 [4Fe-4S] clusters. Binds 1 [4Fe-4S] cluster coordinated with 3 cysteines and an exchangeable S-adenosyl-L-methionine and 1 [4Fe-4S] cluster coordinated with 3 cysteines and the GTP-derived substrate.</text>
</comment>
<comment type="pathway">
    <text evidence="1">Cofactor biosynthesis; molybdopterin biosynthesis.</text>
</comment>
<comment type="subunit">
    <text evidence="1">Monomer and homodimer.</text>
</comment>
<comment type="similarity">
    <text evidence="1">Belongs to the radical SAM superfamily. MoaA family.</text>
</comment>
<gene>
    <name evidence="1" type="primary">moaA</name>
    <name type="ordered locus">APJL_0688</name>
</gene>
<name>MOAA_ACTPJ</name>
<organism>
    <name type="scientific">Actinobacillus pleuropneumoniae serotype 3 (strain JL03)</name>
    <dbReference type="NCBI Taxonomy" id="434271"/>
    <lineage>
        <taxon>Bacteria</taxon>
        <taxon>Pseudomonadati</taxon>
        <taxon>Pseudomonadota</taxon>
        <taxon>Gammaproteobacteria</taxon>
        <taxon>Pasteurellales</taxon>
        <taxon>Pasteurellaceae</taxon>
        <taxon>Actinobacillus</taxon>
    </lineage>
</organism>
<reference key="1">
    <citation type="journal article" date="2008" name="PLoS ONE">
        <title>Genome biology of Actinobacillus pleuropneumoniae JL03, an isolate of serotype 3 prevalent in China.</title>
        <authorList>
            <person name="Xu Z."/>
            <person name="Zhou Y."/>
            <person name="Li L."/>
            <person name="Zhou R."/>
            <person name="Xiao S."/>
            <person name="Wan Y."/>
            <person name="Zhang S."/>
            <person name="Wang K."/>
            <person name="Li W."/>
            <person name="Li L."/>
            <person name="Jin H."/>
            <person name="Kang M."/>
            <person name="Dalai B."/>
            <person name="Li T."/>
            <person name="Liu L."/>
            <person name="Cheng Y."/>
            <person name="Zhang L."/>
            <person name="Xu T."/>
            <person name="Zheng H."/>
            <person name="Pu S."/>
            <person name="Wang B."/>
            <person name="Gu W."/>
            <person name="Zhang X.L."/>
            <person name="Zhu G.-F."/>
            <person name="Wang S."/>
            <person name="Zhao G.-P."/>
            <person name="Chen H."/>
        </authorList>
    </citation>
    <scope>NUCLEOTIDE SEQUENCE [LARGE SCALE GENOMIC DNA]</scope>
    <source>
        <strain>JL03</strain>
    </source>
</reference>
<evidence type="ECO:0000255" key="1">
    <source>
        <dbReference type="HAMAP-Rule" id="MF_01225"/>
    </source>
</evidence>
<evidence type="ECO:0000255" key="2">
    <source>
        <dbReference type="PROSITE-ProRule" id="PRU01266"/>
    </source>
</evidence>
<accession>B0BNX2</accession>
<protein>
    <recommendedName>
        <fullName evidence="1">GTP 3',8-cyclase</fullName>
        <ecNumber evidence="1">4.1.99.22</ecNumber>
    </recommendedName>
    <alternativeName>
        <fullName evidence="1">Molybdenum cofactor biosynthesis protein A</fullName>
    </alternativeName>
</protein>
<keyword id="KW-0004">4Fe-4S</keyword>
<keyword id="KW-0342">GTP-binding</keyword>
<keyword id="KW-0408">Iron</keyword>
<keyword id="KW-0411">Iron-sulfur</keyword>
<keyword id="KW-0456">Lyase</keyword>
<keyword id="KW-0479">Metal-binding</keyword>
<keyword id="KW-0501">Molybdenum cofactor biosynthesis</keyword>
<keyword id="KW-0547">Nucleotide-binding</keyword>
<keyword id="KW-0949">S-adenosyl-L-methionine</keyword>
<sequence>MQSIPIKNVGTDNISQLIDRFERQYVYLRLSITDVCNFRCNYCLPDGYKPPSHKQQFLSVSEIQRVVRAFADLGTEKVRITGGEPTLRKDFLEIAHTVSQTNGIKKVALTTNGYRMERDIDLWQQAGITDINVSVDSLDTRQFQLITGENKLQSILKGIDRAFEIGYRKIKVNAVLMKQYTAPELDKFLVWIKDKPIQMRFIELMETGEMDSFFQAQHLSGQSVMQRLLQEGWQLQPKALSDGPAKVLSHPDYQGEIGLIMPYEKNFCASCNRLRVSALGKLHLCLFGEEGIDLRDLLSEDTQQAQLEARLKAALQGKREHHYLHIGDSGIRNNLASIGG</sequence>